<accession>Q7W200</accession>
<sequence length="387" mass="42002">MANNDFLFTSESVSEGHPDKVADQISDAILDAIFTQDPNARVAAETLCNTGLVVLAGEITTTANVDYIQVARDTIRHIGYDNTEYGIDYKGCAVLVAYDKQSPDIAQGVDRSSEDYLNQGAGDQGLMFGYACDETPDLMPAPIWYAHRLVQRQSELRKDGRLPWLRPDAKSQVTFRYVDGRPAEVDTVVLSTQHSPEISQASIREAVIEDIIKPSFPEGLITPKTKFLVNPTGRFVIGGPQGDCGLTGRKIIVDTYGGACPHGGGAFSGKDPSKVDRSAAYAARYVAKNVVAAGLARQCQVQVSYAIGVAEPINITVYTEGTGVIPDEQIAKLVREHFDLRPKGIVNMLDLLRPIYTKTAAYGHFGRSEPEFSWEATDKAAALKQGA</sequence>
<comment type="function">
    <text evidence="1">Catalyzes the formation of S-adenosylmethionine (AdoMet) from methionine and ATP. The overall synthetic reaction is composed of two sequential steps, AdoMet formation and the subsequent tripolyphosphate hydrolysis which occurs prior to release of AdoMet from the enzyme.</text>
</comment>
<comment type="catalytic activity">
    <reaction evidence="1">
        <text>L-methionine + ATP + H2O = S-adenosyl-L-methionine + phosphate + diphosphate</text>
        <dbReference type="Rhea" id="RHEA:21080"/>
        <dbReference type="ChEBI" id="CHEBI:15377"/>
        <dbReference type="ChEBI" id="CHEBI:30616"/>
        <dbReference type="ChEBI" id="CHEBI:33019"/>
        <dbReference type="ChEBI" id="CHEBI:43474"/>
        <dbReference type="ChEBI" id="CHEBI:57844"/>
        <dbReference type="ChEBI" id="CHEBI:59789"/>
        <dbReference type="EC" id="2.5.1.6"/>
    </reaction>
</comment>
<comment type="cofactor">
    <cofactor evidence="1">
        <name>Mg(2+)</name>
        <dbReference type="ChEBI" id="CHEBI:18420"/>
    </cofactor>
    <text evidence="1">Binds 2 divalent ions per subunit.</text>
</comment>
<comment type="cofactor">
    <cofactor evidence="1">
        <name>K(+)</name>
        <dbReference type="ChEBI" id="CHEBI:29103"/>
    </cofactor>
    <text evidence="1">Binds 1 potassium ion per subunit.</text>
</comment>
<comment type="pathway">
    <text evidence="1">Amino-acid biosynthesis; S-adenosyl-L-methionine biosynthesis; S-adenosyl-L-methionine from L-methionine: step 1/1.</text>
</comment>
<comment type="subunit">
    <text evidence="1">Homotetramer; dimer of dimers.</text>
</comment>
<comment type="subcellular location">
    <subcellularLocation>
        <location evidence="1">Cytoplasm</location>
    </subcellularLocation>
</comment>
<comment type="similarity">
    <text evidence="1">Belongs to the AdoMet synthase family.</text>
</comment>
<comment type="sequence caution" evidence="2">
    <conflict type="erroneous initiation">
        <sequence resource="EMBL-CDS" id="CAE39933"/>
    </conflict>
</comment>
<keyword id="KW-0067">ATP-binding</keyword>
<keyword id="KW-0963">Cytoplasm</keyword>
<keyword id="KW-0460">Magnesium</keyword>
<keyword id="KW-0479">Metal-binding</keyword>
<keyword id="KW-0547">Nucleotide-binding</keyword>
<keyword id="KW-0554">One-carbon metabolism</keyword>
<keyword id="KW-0630">Potassium</keyword>
<keyword id="KW-0808">Transferase</keyword>
<evidence type="ECO:0000255" key="1">
    <source>
        <dbReference type="HAMAP-Rule" id="MF_00086"/>
    </source>
</evidence>
<evidence type="ECO:0000305" key="2"/>
<protein>
    <recommendedName>
        <fullName evidence="1">S-adenosylmethionine synthase</fullName>
        <shortName evidence="1">AdoMet synthase</shortName>
        <ecNumber evidence="1">2.5.1.6</ecNumber>
    </recommendedName>
    <alternativeName>
        <fullName evidence="1">MAT</fullName>
    </alternativeName>
    <alternativeName>
        <fullName evidence="1">Methionine adenosyltransferase</fullName>
    </alternativeName>
</protein>
<gene>
    <name evidence="1" type="primary">metK</name>
    <name type="ordered locus">BPP0192</name>
</gene>
<name>METK_BORPA</name>
<feature type="chain" id="PRO_0000174499" description="S-adenosylmethionine synthase">
    <location>
        <begin position="1"/>
        <end position="387"/>
    </location>
</feature>
<feature type="region of interest" description="Flexible loop" evidence="1">
    <location>
        <begin position="101"/>
        <end position="111"/>
    </location>
</feature>
<feature type="binding site" description="in other chain" evidence="1">
    <location>
        <position position="17"/>
    </location>
    <ligand>
        <name>ATP</name>
        <dbReference type="ChEBI" id="CHEBI:30616"/>
        <note>ligand shared between two neighboring subunits</note>
    </ligand>
</feature>
<feature type="binding site" evidence="1">
    <location>
        <position position="19"/>
    </location>
    <ligand>
        <name>Mg(2+)</name>
        <dbReference type="ChEBI" id="CHEBI:18420"/>
    </ligand>
</feature>
<feature type="binding site" evidence="1">
    <location>
        <position position="45"/>
    </location>
    <ligand>
        <name>K(+)</name>
        <dbReference type="ChEBI" id="CHEBI:29103"/>
    </ligand>
</feature>
<feature type="binding site" description="in other chain" evidence="1">
    <location>
        <position position="58"/>
    </location>
    <ligand>
        <name>L-methionine</name>
        <dbReference type="ChEBI" id="CHEBI:57844"/>
        <note>ligand shared between two neighboring subunits</note>
    </ligand>
</feature>
<feature type="binding site" description="in other chain" evidence="1">
    <location>
        <position position="101"/>
    </location>
    <ligand>
        <name>L-methionine</name>
        <dbReference type="ChEBI" id="CHEBI:57844"/>
        <note>ligand shared between two neighboring subunits</note>
    </ligand>
</feature>
<feature type="binding site" description="in other chain" evidence="1">
    <location>
        <begin position="168"/>
        <end position="170"/>
    </location>
    <ligand>
        <name>ATP</name>
        <dbReference type="ChEBI" id="CHEBI:30616"/>
        <note>ligand shared between two neighboring subunits</note>
    </ligand>
</feature>
<feature type="binding site" description="in other chain" evidence="1">
    <location>
        <begin position="234"/>
        <end position="235"/>
    </location>
    <ligand>
        <name>ATP</name>
        <dbReference type="ChEBI" id="CHEBI:30616"/>
        <note>ligand shared between two neighboring subunits</note>
    </ligand>
</feature>
<feature type="binding site" evidence="1">
    <location>
        <position position="243"/>
    </location>
    <ligand>
        <name>ATP</name>
        <dbReference type="ChEBI" id="CHEBI:30616"/>
        <note>ligand shared between two neighboring subunits</note>
    </ligand>
</feature>
<feature type="binding site" evidence="1">
    <location>
        <position position="243"/>
    </location>
    <ligand>
        <name>L-methionine</name>
        <dbReference type="ChEBI" id="CHEBI:57844"/>
        <note>ligand shared between two neighboring subunits</note>
    </ligand>
</feature>
<feature type="binding site" description="in other chain" evidence="1">
    <location>
        <begin position="249"/>
        <end position="250"/>
    </location>
    <ligand>
        <name>ATP</name>
        <dbReference type="ChEBI" id="CHEBI:30616"/>
        <note>ligand shared between two neighboring subunits</note>
    </ligand>
</feature>
<feature type="binding site" evidence="1">
    <location>
        <position position="266"/>
    </location>
    <ligand>
        <name>ATP</name>
        <dbReference type="ChEBI" id="CHEBI:30616"/>
        <note>ligand shared between two neighboring subunits</note>
    </ligand>
</feature>
<feature type="binding site" evidence="1">
    <location>
        <position position="270"/>
    </location>
    <ligand>
        <name>ATP</name>
        <dbReference type="ChEBI" id="CHEBI:30616"/>
        <note>ligand shared between two neighboring subunits</note>
    </ligand>
</feature>
<feature type="binding site" description="in other chain" evidence="1">
    <location>
        <position position="274"/>
    </location>
    <ligand>
        <name>L-methionine</name>
        <dbReference type="ChEBI" id="CHEBI:57844"/>
        <note>ligand shared between two neighboring subunits</note>
    </ligand>
</feature>
<proteinExistence type="inferred from homology"/>
<dbReference type="EC" id="2.5.1.6" evidence="1"/>
<dbReference type="EMBL" id="BX640423">
    <property type="protein sequence ID" value="CAE39933.1"/>
    <property type="status" value="ALT_INIT"/>
    <property type="molecule type" value="Genomic_DNA"/>
</dbReference>
<dbReference type="RefSeq" id="WP_010925730.1">
    <property type="nucleotide sequence ID" value="NC_002928.3"/>
</dbReference>
<dbReference type="SMR" id="Q7W200"/>
<dbReference type="GeneID" id="93206423"/>
<dbReference type="KEGG" id="bpa:BPP0192"/>
<dbReference type="HOGENOM" id="CLU_041802_1_1_4"/>
<dbReference type="UniPathway" id="UPA00315">
    <property type="reaction ID" value="UER00080"/>
</dbReference>
<dbReference type="Proteomes" id="UP000001421">
    <property type="component" value="Chromosome"/>
</dbReference>
<dbReference type="GO" id="GO:0005737">
    <property type="term" value="C:cytoplasm"/>
    <property type="evidence" value="ECO:0007669"/>
    <property type="project" value="UniProtKB-SubCell"/>
</dbReference>
<dbReference type="GO" id="GO:0005524">
    <property type="term" value="F:ATP binding"/>
    <property type="evidence" value="ECO:0007669"/>
    <property type="project" value="UniProtKB-UniRule"/>
</dbReference>
<dbReference type="GO" id="GO:0000287">
    <property type="term" value="F:magnesium ion binding"/>
    <property type="evidence" value="ECO:0007669"/>
    <property type="project" value="UniProtKB-UniRule"/>
</dbReference>
<dbReference type="GO" id="GO:0004478">
    <property type="term" value="F:methionine adenosyltransferase activity"/>
    <property type="evidence" value="ECO:0007669"/>
    <property type="project" value="UniProtKB-UniRule"/>
</dbReference>
<dbReference type="GO" id="GO:0006730">
    <property type="term" value="P:one-carbon metabolic process"/>
    <property type="evidence" value="ECO:0007669"/>
    <property type="project" value="UniProtKB-KW"/>
</dbReference>
<dbReference type="GO" id="GO:0006556">
    <property type="term" value="P:S-adenosylmethionine biosynthetic process"/>
    <property type="evidence" value="ECO:0007669"/>
    <property type="project" value="UniProtKB-UniRule"/>
</dbReference>
<dbReference type="CDD" id="cd18079">
    <property type="entry name" value="S-AdoMet_synt"/>
    <property type="match status" value="1"/>
</dbReference>
<dbReference type="FunFam" id="3.30.300.10:FF:000003">
    <property type="entry name" value="S-adenosylmethionine synthase"/>
    <property type="match status" value="1"/>
</dbReference>
<dbReference type="FunFam" id="3.30.300.10:FF:000004">
    <property type="entry name" value="S-adenosylmethionine synthase"/>
    <property type="match status" value="1"/>
</dbReference>
<dbReference type="Gene3D" id="3.30.300.10">
    <property type="match status" value="3"/>
</dbReference>
<dbReference type="HAMAP" id="MF_00086">
    <property type="entry name" value="S_AdoMet_synth1"/>
    <property type="match status" value="1"/>
</dbReference>
<dbReference type="InterPro" id="IPR022631">
    <property type="entry name" value="ADOMET_SYNTHASE_CS"/>
</dbReference>
<dbReference type="InterPro" id="IPR022630">
    <property type="entry name" value="S-AdoMet_synt_C"/>
</dbReference>
<dbReference type="InterPro" id="IPR022629">
    <property type="entry name" value="S-AdoMet_synt_central"/>
</dbReference>
<dbReference type="InterPro" id="IPR022628">
    <property type="entry name" value="S-AdoMet_synt_N"/>
</dbReference>
<dbReference type="InterPro" id="IPR002133">
    <property type="entry name" value="S-AdoMet_synthetase"/>
</dbReference>
<dbReference type="InterPro" id="IPR022636">
    <property type="entry name" value="S-AdoMet_synthetase_sfam"/>
</dbReference>
<dbReference type="NCBIfam" id="TIGR01034">
    <property type="entry name" value="metK"/>
    <property type="match status" value="1"/>
</dbReference>
<dbReference type="PANTHER" id="PTHR11964">
    <property type="entry name" value="S-ADENOSYLMETHIONINE SYNTHETASE"/>
    <property type="match status" value="1"/>
</dbReference>
<dbReference type="Pfam" id="PF02773">
    <property type="entry name" value="S-AdoMet_synt_C"/>
    <property type="match status" value="1"/>
</dbReference>
<dbReference type="Pfam" id="PF02772">
    <property type="entry name" value="S-AdoMet_synt_M"/>
    <property type="match status" value="1"/>
</dbReference>
<dbReference type="Pfam" id="PF00438">
    <property type="entry name" value="S-AdoMet_synt_N"/>
    <property type="match status" value="1"/>
</dbReference>
<dbReference type="PIRSF" id="PIRSF000497">
    <property type="entry name" value="MAT"/>
    <property type="match status" value="1"/>
</dbReference>
<dbReference type="SUPFAM" id="SSF55973">
    <property type="entry name" value="S-adenosylmethionine synthetase"/>
    <property type="match status" value="3"/>
</dbReference>
<dbReference type="PROSITE" id="PS00376">
    <property type="entry name" value="ADOMET_SYNTHASE_1"/>
    <property type="match status" value="1"/>
</dbReference>
<dbReference type="PROSITE" id="PS00377">
    <property type="entry name" value="ADOMET_SYNTHASE_2"/>
    <property type="match status" value="1"/>
</dbReference>
<reference key="1">
    <citation type="journal article" date="2003" name="Nat. Genet.">
        <title>Comparative analysis of the genome sequences of Bordetella pertussis, Bordetella parapertussis and Bordetella bronchiseptica.</title>
        <authorList>
            <person name="Parkhill J."/>
            <person name="Sebaihia M."/>
            <person name="Preston A."/>
            <person name="Murphy L.D."/>
            <person name="Thomson N.R."/>
            <person name="Harris D.E."/>
            <person name="Holden M.T.G."/>
            <person name="Churcher C.M."/>
            <person name="Bentley S.D."/>
            <person name="Mungall K.L."/>
            <person name="Cerdeno-Tarraga A.-M."/>
            <person name="Temple L."/>
            <person name="James K.D."/>
            <person name="Harris B."/>
            <person name="Quail M.A."/>
            <person name="Achtman M."/>
            <person name="Atkin R."/>
            <person name="Baker S."/>
            <person name="Basham D."/>
            <person name="Bason N."/>
            <person name="Cherevach I."/>
            <person name="Chillingworth T."/>
            <person name="Collins M."/>
            <person name="Cronin A."/>
            <person name="Davis P."/>
            <person name="Doggett J."/>
            <person name="Feltwell T."/>
            <person name="Goble A."/>
            <person name="Hamlin N."/>
            <person name="Hauser H."/>
            <person name="Holroyd S."/>
            <person name="Jagels K."/>
            <person name="Leather S."/>
            <person name="Moule S."/>
            <person name="Norberczak H."/>
            <person name="O'Neil S."/>
            <person name="Ormond D."/>
            <person name="Price C."/>
            <person name="Rabbinowitsch E."/>
            <person name="Rutter S."/>
            <person name="Sanders M."/>
            <person name="Saunders D."/>
            <person name="Seeger K."/>
            <person name="Sharp S."/>
            <person name="Simmonds M."/>
            <person name="Skelton J."/>
            <person name="Squares R."/>
            <person name="Squares S."/>
            <person name="Stevens K."/>
            <person name="Unwin L."/>
            <person name="Whitehead S."/>
            <person name="Barrell B.G."/>
            <person name="Maskell D.J."/>
        </authorList>
    </citation>
    <scope>NUCLEOTIDE SEQUENCE [LARGE SCALE GENOMIC DNA]</scope>
    <source>
        <strain>12822 / ATCC BAA-587 / NCTC 13253</strain>
    </source>
</reference>
<organism>
    <name type="scientific">Bordetella parapertussis (strain 12822 / ATCC BAA-587 / NCTC 13253)</name>
    <dbReference type="NCBI Taxonomy" id="257311"/>
    <lineage>
        <taxon>Bacteria</taxon>
        <taxon>Pseudomonadati</taxon>
        <taxon>Pseudomonadota</taxon>
        <taxon>Betaproteobacteria</taxon>
        <taxon>Burkholderiales</taxon>
        <taxon>Alcaligenaceae</taxon>
        <taxon>Bordetella</taxon>
    </lineage>
</organism>